<keyword id="KW-0963">Cytoplasm</keyword>
<keyword id="KW-0312">Gluconeogenesis</keyword>
<keyword id="KW-0324">Glycolysis</keyword>
<keyword id="KW-0413">Isomerase</keyword>
<protein>
    <recommendedName>
        <fullName evidence="1">Triosephosphate isomerase</fullName>
        <shortName evidence="1">TIM</shortName>
        <shortName evidence="1">TPI</shortName>
        <ecNumber evidence="1">5.3.1.1</ecNumber>
    </recommendedName>
    <alternativeName>
        <fullName evidence="1">Triose-phosphate isomerase</fullName>
    </alternativeName>
</protein>
<dbReference type="EC" id="5.3.1.1" evidence="1"/>
<dbReference type="EMBL" id="AP009351">
    <property type="protein sequence ID" value="BAF67015.1"/>
    <property type="molecule type" value="Genomic_DNA"/>
</dbReference>
<dbReference type="RefSeq" id="WP_001260089.1">
    <property type="nucleotide sequence ID" value="NZ_JBBIAE010000002.1"/>
</dbReference>
<dbReference type="SMR" id="A6QF83"/>
<dbReference type="KEGG" id="sae:NWMN_0743"/>
<dbReference type="HOGENOM" id="CLU_024251_2_3_9"/>
<dbReference type="UniPathway" id="UPA00109">
    <property type="reaction ID" value="UER00189"/>
</dbReference>
<dbReference type="UniPathway" id="UPA00138"/>
<dbReference type="Proteomes" id="UP000006386">
    <property type="component" value="Chromosome"/>
</dbReference>
<dbReference type="GO" id="GO:0005829">
    <property type="term" value="C:cytosol"/>
    <property type="evidence" value="ECO:0007669"/>
    <property type="project" value="TreeGrafter"/>
</dbReference>
<dbReference type="GO" id="GO:0004807">
    <property type="term" value="F:triose-phosphate isomerase activity"/>
    <property type="evidence" value="ECO:0007669"/>
    <property type="project" value="UniProtKB-UniRule"/>
</dbReference>
<dbReference type="GO" id="GO:0006094">
    <property type="term" value="P:gluconeogenesis"/>
    <property type="evidence" value="ECO:0007669"/>
    <property type="project" value="UniProtKB-UniRule"/>
</dbReference>
<dbReference type="GO" id="GO:0046166">
    <property type="term" value="P:glyceraldehyde-3-phosphate biosynthetic process"/>
    <property type="evidence" value="ECO:0007669"/>
    <property type="project" value="TreeGrafter"/>
</dbReference>
<dbReference type="GO" id="GO:0019563">
    <property type="term" value="P:glycerol catabolic process"/>
    <property type="evidence" value="ECO:0007669"/>
    <property type="project" value="TreeGrafter"/>
</dbReference>
<dbReference type="GO" id="GO:0006096">
    <property type="term" value="P:glycolytic process"/>
    <property type="evidence" value="ECO:0007669"/>
    <property type="project" value="UniProtKB-UniRule"/>
</dbReference>
<dbReference type="CDD" id="cd00311">
    <property type="entry name" value="TIM"/>
    <property type="match status" value="1"/>
</dbReference>
<dbReference type="FunFam" id="3.20.20.70:FF:000016">
    <property type="entry name" value="Triosephosphate isomerase"/>
    <property type="match status" value="1"/>
</dbReference>
<dbReference type="Gene3D" id="3.20.20.70">
    <property type="entry name" value="Aldolase class I"/>
    <property type="match status" value="1"/>
</dbReference>
<dbReference type="HAMAP" id="MF_00147_B">
    <property type="entry name" value="TIM_B"/>
    <property type="match status" value="1"/>
</dbReference>
<dbReference type="InterPro" id="IPR013785">
    <property type="entry name" value="Aldolase_TIM"/>
</dbReference>
<dbReference type="InterPro" id="IPR035990">
    <property type="entry name" value="TIM_sf"/>
</dbReference>
<dbReference type="InterPro" id="IPR022896">
    <property type="entry name" value="TrioseP_Isoase_bac/euk"/>
</dbReference>
<dbReference type="InterPro" id="IPR000652">
    <property type="entry name" value="Triosephosphate_isomerase"/>
</dbReference>
<dbReference type="InterPro" id="IPR020861">
    <property type="entry name" value="Triosephosphate_isomerase_AS"/>
</dbReference>
<dbReference type="NCBIfam" id="TIGR00419">
    <property type="entry name" value="tim"/>
    <property type="match status" value="1"/>
</dbReference>
<dbReference type="PANTHER" id="PTHR21139">
    <property type="entry name" value="TRIOSEPHOSPHATE ISOMERASE"/>
    <property type="match status" value="1"/>
</dbReference>
<dbReference type="PANTHER" id="PTHR21139:SF42">
    <property type="entry name" value="TRIOSEPHOSPHATE ISOMERASE"/>
    <property type="match status" value="1"/>
</dbReference>
<dbReference type="Pfam" id="PF00121">
    <property type="entry name" value="TIM"/>
    <property type="match status" value="1"/>
</dbReference>
<dbReference type="SUPFAM" id="SSF51351">
    <property type="entry name" value="Triosephosphate isomerase (TIM)"/>
    <property type="match status" value="1"/>
</dbReference>
<dbReference type="PROSITE" id="PS00171">
    <property type="entry name" value="TIM_1"/>
    <property type="match status" value="1"/>
</dbReference>
<dbReference type="PROSITE" id="PS51440">
    <property type="entry name" value="TIM_2"/>
    <property type="match status" value="1"/>
</dbReference>
<accession>A6QF83</accession>
<reference key="1">
    <citation type="journal article" date="2008" name="J. Bacteriol.">
        <title>Genome sequence of Staphylococcus aureus strain Newman and comparative analysis of staphylococcal genomes: polymorphism and evolution of two major pathogenicity islands.</title>
        <authorList>
            <person name="Baba T."/>
            <person name="Bae T."/>
            <person name="Schneewind O."/>
            <person name="Takeuchi F."/>
            <person name="Hiramatsu K."/>
        </authorList>
    </citation>
    <scope>NUCLEOTIDE SEQUENCE [LARGE SCALE GENOMIC DNA]</scope>
    <source>
        <strain>Newman</strain>
    </source>
</reference>
<comment type="function">
    <text evidence="1">Involved in the gluconeogenesis. Catalyzes stereospecifically the conversion of dihydroxyacetone phosphate (DHAP) to D-glyceraldehyde-3-phosphate (G3P).</text>
</comment>
<comment type="catalytic activity">
    <reaction evidence="1">
        <text>D-glyceraldehyde 3-phosphate = dihydroxyacetone phosphate</text>
        <dbReference type="Rhea" id="RHEA:18585"/>
        <dbReference type="ChEBI" id="CHEBI:57642"/>
        <dbReference type="ChEBI" id="CHEBI:59776"/>
        <dbReference type="EC" id="5.3.1.1"/>
    </reaction>
</comment>
<comment type="pathway">
    <text evidence="1">Carbohydrate biosynthesis; gluconeogenesis.</text>
</comment>
<comment type="pathway">
    <text evidence="1">Carbohydrate degradation; glycolysis; D-glyceraldehyde 3-phosphate from glycerone phosphate: step 1/1.</text>
</comment>
<comment type="subunit">
    <text evidence="1">Homodimer.</text>
</comment>
<comment type="subcellular location">
    <subcellularLocation>
        <location evidence="1">Cytoplasm</location>
    </subcellularLocation>
</comment>
<comment type="similarity">
    <text evidence="1">Belongs to the triosephosphate isomerase family.</text>
</comment>
<gene>
    <name evidence="1" type="primary">tpiA</name>
    <name type="ordered locus">NWMN_0743</name>
</gene>
<evidence type="ECO:0000255" key="1">
    <source>
        <dbReference type="HAMAP-Rule" id="MF_00147"/>
    </source>
</evidence>
<proteinExistence type="inferred from homology"/>
<sequence length="253" mass="27262">MRTPIIAGNWKMNKTVQEAKDFVNALPTLPDSKEVESVICAPAIQLDALTTAVKEGKAQGLEIGAQNTYFEDNGAFTGETSPVALADLGVKYVVIGHSERRELFHETDEEINKKAHAIFKHGMTPIICVGETDEERESGKANDVVGEQVKKAVAGLSEDQLKSVVIAYEPIWAIGTGKSSTSEDANEMCAFVRQTIADLSSKEVSEATRIQYGGSVKPNNIKEYMAQTDIDGALVGGASLKVEDFVQLLEGAK</sequence>
<name>TPIS_STAAE</name>
<organism>
    <name type="scientific">Staphylococcus aureus (strain Newman)</name>
    <dbReference type="NCBI Taxonomy" id="426430"/>
    <lineage>
        <taxon>Bacteria</taxon>
        <taxon>Bacillati</taxon>
        <taxon>Bacillota</taxon>
        <taxon>Bacilli</taxon>
        <taxon>Bacillales</taxon>
        <taxon>Staphylococcaceae</taxon>
        <taxon>Staphylococcus</taxon>
    </lineage>
</organism>
<feature type="chain" id="PRO_1000071494" description="Triosephosphate isomerase">
    <location>
        <begin position="1"/>
        <end position="253"/>
    </location>
</feature>
<feature type="active site" description="Electrophile" evidence="1">
    <location>
        <position position="97"/>
    </location>
</feature>
<feature type="active site" description="Proton acceptor" evidence="1">
    <location>
        <position position="169"/>
    </location>
</feature>
<feature type="binding site" evidence="1">
    <location>
        <begin position="9"/>
        <end position="11"/>
    </location>
    <ligand>
        <name>substrate</name>
    </ligand>
</feature>
<feature type="binding site" evidence="1">
    <location>
        <position position="175"/>
    </location>
    <ligand>
        <name>substrate</name>
    </ligand>
</feature>
<feature type="binding site" evidence="1">
    <location>
        <position position="215"/>
    </location>
    <ligand>
        <name>substrate</name>
    </ligand>
</feature>
<feature type="binding site" evidence="1">
    <location>
        <begin position="236"/>
        <end position="237"/>
    </location>
    <ligand>
        <name>substrate</name>
    </ligand>
</feature>